<name>SSRP_PSEF5</name>
<accession>Q4KIH9</accession>
<protein>
    <recommendedName>
        <fullName evidence="1">SsrA-binding protein</fullName>
    </recommendedName>
    <alternativeName>
        <fullName evidence="1">Small protein B</fullName>
    </alternativeName>
</protein>
<reference key="1">
    <citation type="journal article" date="2005" name="Nat. Biotechnol.">
        <title>Complete genome sequence of the plant commensal Pseudomonas fluorescens Pf-5.</title>
        <authorList>
            <person name="Paulsen I.T."/>
            <person name="Press C.M."/>
            <person name="Ravel J."/>
            <person name="Kobayashi D.Y."/>
            <person name="Myers G.S.A."/>
            <person name="Mavrodi D.V."/>
            <person name="DeBoy R.T."/>
            <person name="Seshadri R."/>
            <person name="Ren Q."/>
            <person name="Madupu R."/>
            <person name="Dodson R.J."/>
            <person name="Durkin A.S."/>
            <person name="Brinkac L.M."/>
            <person name="Daugherty S.C."/>
            <person name="Sullivan S.A."/>
            <person name="Rosovitz M.J."/>
            <person name="Gwinn M.L."/>
            <person name="Zhou L."/>
            <person name="Schneider D.J."/>
            <person name="Cartinhour S.W."/>
            <person name="Nelson W.C."/>
            <person name="Weidman J."/>
            <person name="Watkins K."/>
            <person name="Tran K."/>
            <person name="Khouri H."/>
            <person name="Pierson E.A."/>
            <person name="Pierson L.S. III"/>
            <person name="Thomashow L.S."/>
            <person name="Loper J.E."/>
        </authorList>
    </citation>
    <scope>NUCLEOTIDE SEQUENCE [LARGE SCALE GENOMIC DNA]</scope>
    <source>
        <strain>ATCC BAA-477 / NRRL B-23932 / Pf-5</strain>
    </source>
</reference>
<evidence type="ECO:0000255" key="1">
    <source>
        <dbReference type="HAMAP-Rule" id="MF_00023"/>
    </source>
</evidence>
<evidence type="ECO:0000256" key="2">
    <source>
        <dbReference type="SAM" id="MobiDB-lite"/>
    </source>
</evidence>
<gene>
    <name evidence="1" type="primary">smpB</name>
    <name type="ordered locus">PFL_0819</name>
</gene>
<sequence length="160" mass="18334">MAKQKKHPTGTIAQNKKARHDYFIEHRFEAGMVLAGWEVKSLRAGKAQLVDSYVLLKDGEAWLLGSHFTPLTTASTHVIADPTRSRKLLLNQRELEKLFAAVQQKGYACVCLSLYWSKHLVKCEIALGKGKKEYDKRHTERERDSDRELQRAVRTKGKED</sequence>
<organism>
    <name type="scientific">Pseudomonas fluorescens (strain ATCC BAA-477 / NRRL B-23932 / Pf-5)</name>
    <dbReference type="NCBI Taxonomy" id="220664"/>
    <lineage>
        <taxon>Bacteria</taxon>
        <taxon>Pseudomonadati</taxon>
        <taxon>Pseudomonadota</taxon>
        <taxon>Gammaproteobacteria</taxon>
        <taxon>Pseudomonadales</taxon>
        <taxon>Pseudomonadaceae</taxon>
        <taxon>Pseudomonas</taxon>
    </lineage>
</organism>
<comment type="function">
    <text evidence="1">Required for rescue of stalled ribosomes mediated by trans-translation. Binds to transfer-messenger RNA (tmRNA), required for stable association of tmRNA with ribosomes. tmRNA and SmpB together mimic tRNA shape, replacing the anticodon stem-loop with SmpB. tmRNA is encoded by the ssrA gene; the 2 termini fold to resemble tRNA(Ala) and it encodes a 'tag peptide', a short internal open reading frame. During trans-translation Ala-aminoacylated tmRNA acts like a tRNA, entering the A-site of stalled ribosomes, displacing the stalled mRNA. The ribosome then switches to translate the ORF on the tmRNA; the nascent peptide is terminated with the 'tag peptide' encoded by the tmRNA and targeted for degradation. The ribosome is freed to recommence translation, which seems to be the essential function of trans-translation.</text>
</comment>
<comment type="subcellular location">
    <subcellularLocation>
        <location evidence="1">Cytoplasm</location>
    </subcellularLocation>
    <text evidence="1">The tmRNA-SmpB complex associates with stalled 70S ribosomes.</text>
</comment>
<comment type="similarity">
    <text evidence="1">Belongs to the SmpB family.</text>
</comment>
<feature type="chain" id="PRO_1000002112" description="SsrA-binding protein">
    <location>
        <begin position="1"/>
        <end position="160"/>
    </location>
</feature>
<feature type="region of interest" description="Disordered" evidence="2">
    <location>
        <begin position="131"/>
        <end position="160"/>
    </location>
</feature>
<dbReference type="EMBL" id="CP000076">
    <property type="protein sequence ID" value="AAY96219.1"/>
    <property type="molecule type" value="Genomic_DNA"/>
</dbReference>
<dbReference type="RefSeq" id="WP_011059180.1">
    <property type="nucleotide sequence ID" value="NC_004129.6"/>
</dbReference>
<dbReference type="SMR" id="Q4KIH9"/>
<dbReference type="STRING" id="220664.PFL_0819"/>
<dbReference type="KEGG" id="pfl:PFL_0819"/>
<dbReference type="PATRIC" id="fig|220664.5.peg.840"/>
<dbReference type="eggNOG" id="COG0691">
    <property type="taxonomic scope" value="Bacteria"/>
</dbReference>
<dbReference type="HOGENOM" id="CLU_108953_3_0_6"/>
<dbReference type="Proteomes" id="UP000008540">
    <property type="component" value="Chromosome"/>
</dbReference>
<dbReference type="GO" id="GO:0005829">
    <property type="term" value="C:cytosol"/>
    <property type="evidence" value="ECO:0007669"/>
    <property type="project" value="TreeGrafter"/>
</dbReference>
<dbReference type="GO" id="GO:0003723">
    <property type="term" value="F:RNA binding"/>
    <property type="evidence" value="ECO:0007669"/>
    <property type="project" value="UniProtKB-UniRule"/>
</dbReference>
<dbReference type="GO" id="GO:0070929">
    <property type="term" value="P:trans-translation"/>
    <property type="evidence" value="ECO:0007669"/>
    <property type="project" value="UniProtKB-UniRule"/>
</dbReference>
<dbReference type="CDD" id="cd09294">
    <property type="entry name" value="SmpB"/>
    <property type="match status" value="1"/>
</dbReference>
<dbReference type="Gene3D" id="2.40.280.10">
    <property type="match status" value="1"/>
</dbReference>
<dbReference type="HAMAP" id="MF_00023">
    <property type="entry name" value="SmpB"/>
    <property type="match status" value="1"/>
</dbReference>
<dbReference type="InterPro" id="IPR023620">
    <property type="entry name" value="SmpB"/>
</dbReference>
<dbReference type="InterPro" id="IPR000037">
    <property type="entry name" value="SsrA-bd_prot"/>
</dbReference>
<dbReference type="InterPro" id="IPR020081">
    <property type="entry name" value="SsrA-bd_prot_CS"/>
</dbReference>
<dbReference type="NCBIfam" id="NF003843">
    <property type="entry name" value="PRK05422.1"/>
    <property type="match status" value="1"/>
</dbReference>
<dbReference type="NCBIfam" id="TIGR00086">
    <property type="entry name" value="smpB"/>
    <property type="match status" value="1"/>
</dbReference>
<dbReference type="PANTHER" id="PTHR30308:SF2">
    <property type="entry name" value="SSRA-BINDING PROTEIN"/>
    <property type="match status" value="1"/>
</dbReference>
<dbReference type="PANTHER" id="PTHR30308">
    <property type="entry name" value="TMRNA-BINDING COMPONENT OF TRANS-TRANSLATION TAGGING COMPLEX"/>
    <property type="match status" value="1"/>
</dbReference>
<dbReference type="Pfam" id="PF01668">
    <property type="entry name" value="SmpB"/>
    <property type="match status" value="1"/>
</dbReference>
<dbReference type="SUPFAM" id="SSF74982">
    <property type="entry name" value="Small protein B (SmpB)"/>
    <property type="match status" value="1"/>
</dbReference>
<dbReference type="PROSITE" id="PS01317">
    <property type="entry name" value="SSRP"/>
    <property type="match status" value="1"/>
</dbReference>
<keyword id="KW-0963">Cytoplasm</keyword>
<keyword id="KW-0694">RNA-binding</keyword>
<proteinExistence type="inferred from homology"/>